<organism>
    <name type="scientific">Brucella abortus (strain 2308)</name>
    <dbReference type="NCBI Taxonomy" id="359391"/>
    <lineage>
        <taxon>Bacteria</taxon>
        <taxon>Pseudomonadati</taxon>
        <taxon>Pseudomonadota</taxon>
        <taxon>Alphaproteobacteria</taxon>
        <taxon>Hyphomicrobiales</taxon>
        <taxon>Brucellaceae</taxon>
        <taxon>Brucella/Ochrobactrum group</taxon>
        <taxon>Brucella</taxon>
    </lineage>
</organism>
<name>RL19_BRUA2</name>
<protein>
    <recommendedName>
        <fullName evidence="1">Large ribosomal subunit protein bL19</fullName>
    </recommendedName>
    <alternativeName>
        <fullName evidence="2">50S ribosomal protein L19</fullName>
    </alternativeName>
</protein>
<comment type="function">
    <text evidence="1">This protein is located at the 30S-50S ribosomal subunit interface and may play a role in the structure and function of the aminoacyl-tRNA binding site.</text>
</comment>
<comment type="similarity">
    <text evidence="1">Belongs to the bacterial ribosomal protein bL19 family.</text>
</comment>
<proteinExistence type="inferred from homology"/>
<gene>
    <name evidence="1" type="primary">rplS</name>
    <name type="ordered locus">BAB1_1906</name>
</gene>
<feature type="chain" id="PRO_0000226833" description="Large ribosomal subunit protein bL19">
    <location>
        <begin position="1"/>
        <end position="145"/>
    </location>
</feature>
<accession>Q2YLP6</accession>
<keyword id="KW-1185">Reference proteome</keyword>
<keyword id="KW-0687">Ribonucleoprotein</keyword>
<keyword id="KW-0689">Ribosomal protein</keyword>
<evidence type="ECO:0000255" key="1">
    <source>
        <dbReference type="HAMAP-Rule" id="MF_00402"/>
    </source>
</evidence>
<evidence type="ECO:0000305" key="2"/>
<reference key="1">
    <citation type="journal article" date="2005" name="Infect. Immun.">
        <title>Whole-genome analyses of speciation events in pathogenic Brucellae.</title>
        <authorList>
            <person name="Chain P.S."/>
            <person name="Comerci D.J."/>
            <person name="Tolmasky M.E."/>
            <person name="Larimer F.W."/>
            <person name="Malfatti S.A."/>
            <person name="Vergez L.M."/>
            <person name="Aguero F."/>
            <person name="Land M.L."/>
            <person name="Ugalde R.A."/>
            <person name="Garcia E."/>
        </authorList>
    </citation>
    <scope>NUCLEOTIDE SEQUENCE [LARGE SCALE GENOMIC DNA]</scope>
    <source>
        <strain>2308</strain>
    </source>
</reference>
<sequence length="145" mass="16077">MTDIIRQLEAEQAAKIEEKRKLPDFQPGDTVRVQVRVTEGTRTRVQAYEGVCIARSGAGLNENFTVRKISYGEGVERVFPVYSPIVEGVEVVRRGKVRRAKLYYLRGLTGKAARIAEKKDNRTKAERAADKLAAAKAEAAKTAAE</sequence>
<dbReference type="EMBL" id="AM040264">
    <property type="protein sequence ID" value="CAJ11862.1"/>
    <property type="molecule type" value="Genomic_DNA"/>
</dbReference>
<dbReference type="RefSeq" id="WP_002964975.1">
    <property type="nucleotide sequence ID" value="NZ_KN046823.1"/>
</dbReference>
<dbReference type="SMR" id="Q2YLP6"/>
<dbReference type="STRING" id="359391.BAB1_1906"/>
<dbReference type="GeneID" id="97534805"/>
<dbReference type="KEGG" id="bmf:BAB1_1906"/>
<dbReference type="PATRIC" id="fig|359391.11.peg.1147"/>
<dbReference type="HOGENOM" id="CLU_103507_0_2_5"/>
<dbReference type="PhylomeDB" id="Q2YLP6"/>
<dbReference type="PRO" id="PR:Q2YLP6"/>
<dbReference type="Proteomes" id="UP000002719">
    <property type="component" value="Chromosome I"/>
</dbReference>
<dbReference type="GO" id="GO:0022625">
    <property type="term" value="C:cytosolic large ribosomal subunit"/>
    <property type="evidence" value="ECO:0007669"/>
    <property type="project" value="TreeGrafter"/>
</dbReference>
<dbReference type="GO" id="GO:0003735">
    <property type="term" value="F:structural constituent of ribosome"/>
    <property type="evidence" value="ECO:0007669"/>
    <property type="project" value="InterPro"/>
</dbReference>
<dbReference type="GO" id="GO:0006412">
    <property type="term" value="P:translation"/>
    <property type="evidence" value="ECO:0007669"/>
    <property type="project" value="UniProtKB-UniRule"/>
</dbReference>
<dbReference type="FunFam" id="2.30.30.790:FF:000001">
    <property type="entry name" value="50S ribosomal protein L19"/>
    <property type="match status" value="1"/>
</dbReference>
<dbReference type="Gene3D" id="2.30.30.790">
    <property type="match status" value="1"/>
</dbReference>
<dbReference type="HAMAP" id="MF_00402">
    <property type="entry name" value="Ribosomal_bL19"/>
    <property type="match status" value="1"/>
</dbReference>
<dbReference type="InterPro" id="IPR001857">
    <property type="entry name" value="Ribosomal_bL19"/>
</dbReference>
<dbReference type="InterPro" id="IPR018257">
    <property type="entry name" value="Ribosomal_bL19_CS"/>
</dbReference>
<dbReference type="InterPro" id="IPR038657">
    <property type="entry name" value="Ribosomal_bL19_sf"/>
</dbReference>
<dbReference type="InterPro" id="IPR008991">
    <property type="entry name" value="Translation_prot_SH3-like_sf"/>
</dbReference>
<dbReference type="NCBIfam" id="TIGR01024">
    <property type="entry name" value="rplS_bact"/>
    <property type="match status" value="1"/>
</dbReference>
<dbReference type="PANTHER" id="PTHR15680:SF9">
    <property type="entry name" value="LARGE RIBOSOMAL SUBUNIT PROTEIN BL19M"/>
    <property type="match status" value="1"/>
</dbReference>
<dbReference type="PANTHER" id="PTHR15680">
    <property type="entry name" value="RIBOSOMAL PROTEIN L19"/>
    <property type="match status" value="1"/>
</dbReference>
<dbReference type="Pfam" id="PF01245">
    <property type="entry name" value="Ribosomal_L19"/>
    <property type="match status" value="1"/>
</dbReference>
<dbReference type="PIRSF" id="PIRSF002191">
    <property type="entry name" value="Ribosomal_L19"/>
    <property type="match status" value="1"/>
</dbReference>
<dbReference type="PRINTS" id="PR00061">
    <property type="entry name" value="RIBOSOMALL19"/>
</dbReference>
<dbReference type="SUPFAM" id="SSF50104">
    <property type="entry name" value="Translation proteins SH3-like domain"/>
    <property type="match status" value="1"/>
</dbReference>
<dbReference type="PROSITE" id="PS01015">
    <property type="entry name" value="RIBOSOMAL_L19"/>
    <property type="match status" value="1"/>
</dbReference>